<keyword id="KW-0175">Coiled coil</keyword>
<keyword id="KW-0963">Cytoplasm</keyword>
<keyword id="KW-1015">Disulfide bond</keyword>
<keyword id="KW-0272">Extracellular matrix</keyword>
<keyword id="KW-0325">Glycoprotein</keyword>
<keyword id="KW-1185">Reference proteome</keyword>
<keyword id="KW-0964">Secreted</keyword>
<keyword id="KW-0732">Signal</keyword>
<gene>
    <name type="primary">Emilin3</name>
    <name type="synonym">Emilin5</name>
</gene>
<feature type="signal peptide" evidence="2">
    <location>
        <begin position="1"/>
        <end position="21"/>
    </location>
</feature>
<feature type="chain" id="PRO_0000007820" description="EMILIN-3">
    <location>
        <begin position="22"/>
        <end position="758"/>
    </location>
</feature>
<feature type="domain" description="EMI" evidence="3">
    <location>
        <begin position="54"/>
        <end position="130"/>
    </location>
</feature>
<feature type="region of interest" description="Disordered" evidence="4">
    <location>
        <begin position="131"/>
        <end position="178"/>
    </location>
</feature>
<feature type="coiled-coil region" evidence="2">
    <location>
        <begin position="379"/>
        <end position="401"/>
    </location>
</feature>
<feature type="coiled-coil region" evidence="2">
    <location>
        <begin position="460"/>
        <end position="483"/>
    </location>
</feature>
<feature type="coiled-coil region" evidence="2">
    <location>
        <begin position="528"/>
        <end position="567"/>
    </location>
</feature>
<feature type="coiled-coil region" evidence="2">
    <location>
        <begin position="642"/>
        <end position="677"/>
    </location>
</feature>
<feature type="coiled-coil region" evidence="2">
    <location>
        <begin position="720"/>
        <end position="753"/>
    </location>
</feature>
<feature type="glycosylation site" description="N-linked (GlcNAc...) asparagine" evidence="2">
    <location>
        <position position="65"/>
    </location>
</feature>
<feature type="glycosylation site" description="N-linked (GlcNAc...) asparagine" evidence="2">
    <location>
        <position position="436"/>
    </location>
</feature>
<feature type="glycosylation site" description="N-linked (GlcNAc...) asparagine" evidence="2">
    <location>
        <position position="555"/>
    </location>
</feature>
<feature type="glycosylation site" description="N-linked (GlcNAc...) asparagine" evidence="2">
    <location>
        <position position="609"/>
    </location>
</feature>
<feature type="glycosylation site" description="N-linked (GlcNAc...) asparagine" evidence="2">
    <location>
        <position position="725"/>
    </location>
</feature>
<feature type="disulfide bond" evidence="3">
    <location>
        <begin position="58"/>
        <end position="120"/>
    </location>
</feature>
<feature type="disulfide bond" evidence="3">
    <location>
        <begin position="85"/>
        <end position="91"/>
    </location>
</feature>
<feature type="disulfide bond" evidence="3">
    <location>
        <begin position="119"/>
        <end position="128"/>
    </location>
</feature>
<accession>P59900</accession>
<proteinExistence type="evidence at transcript level"/>
<protein>
    <recommendedName>
        <fullName>EMILIN-3</fullName>
    </recommendedName>
    <alternativeName>
        <fullName>EMILIN-5</fullName>
    </alternativeName>
    <alternativeName>
        <fullName>Elastin microfibril interface located protein 5</fullName>
        <shortName>Elastin microfibril interfacer 5</shortName>
    </alternativeName>
    <alternativeName>
        <fullName>Elastin microfibril interface-located protein 3</fullName>
        <shortName>Elastin microfibril interfacer 3</shortName>
    </alternativeName>
</protein>
<dbReference type="EMBL" id="BC054738">
    <property type="protein sequence ID" value="AAH54738.1"/>
    <property type="molecule type" value="mRNA"/>
</dbReference>
<dbReference type="EMBL" id="BC057619">
    <property type="protein sequence ID" value="AAH57619.1"/>
    <property type="molecule type" value="mRNA"/>
</dbReference>
<dbReference type="CCDS" id="CCDS16999.1"/>
<dbReference type="RefSeq" id="NP_001278074.1">
    <property type="nucleotide sequence ID" value="NM_001291145.1"/>
</dbReference>
<dbReference type="RefSeq" id="NP_878260.1">
    <property type="nucleotide sequence ID" value="NM_182840.2"/>
</dbReference>
<dbReference type="BioGRID" id="235029">
    <property type="interactions" value="1"/>
</dbReference>
<dbReference type="FunCoup" id="P59900">
    <property type="interactions" value="489"/>
</dbReference>
<dbReference type="GlyCosmos" id="P59900">
    <property type="glycosylation" value="5 sites, No reported glycans"/>
</dbReference>
<dbReference type="GlyGen" id="P59900">
    <property type="glycosylation" value="5 sites, 1 N-linked glycan (1 site)"/>
</dbReference>
<dbReference type="PhosphoSitePlus" id="P59900"/>
<dbReference type="PaxDb" id="10090-ENSMUSP00000059732"/>
<dbReference type="ProteomicsDB" id="277790"/>
<dbReference type="Antibodypedia" id="57328">
    <property type="antibodies" value="79 antibodies from 18 providers"/>
</dbReference>
<dbReference type="Ensembl" id="ENSMUST00000057169.5">
    <property type="protein sequence ID" value="ENSMUSP00000059732.5"/>
    <property type="gene ID" value="ENSMUSG00000050700.12"/>
</dbReference>
<dbReference type="GeneID" id="280635"/>
<dbReference type="KEGG" id="mmu:280635"/>
<dbReference type="UCSC" id="uc008nrk.2">
    <property type="organism name" value="mouse"/>
</dbReference>
<dbReference type="AGR" id="MGI:2389142"/>
<dbReference type="CTD" id="90187"/>
<dbReference type="MGI" id="MGI:2389142">
    <property type="gene designation" value="Emilin3"/>
</dbReference>
<dbReference type="VEuPathDB" id="HostDB:ENSMUSG00000050700"/>
<dbReference type="eggNOG" id="ENOG502QV8J">
    <property type="taxonomic scope" value="Eukaryota"/>
</dbReference>
<dbReference type="GeneTree" id="ENSGT01030000234633"/>
<dbReference type="InParanoid" id="P59900"/>
<dbReference type="OMA" id="EDCQNKN"/>
<dbReference type="OrthoDB" id="10266508at2759"/>
<dbReference type="PhylomeDB" id="P59900"/>
<dbReference type="TreeFam" id="TF331033"/>
<dbReference type="Reactome" id="R-MMU-2129379">
    <property type="pathway name" value="Molecules associated with elastic fibres"/>
</dbReference>
<dbReference type="BioGRID-ORCS" id="280635">
    <property type="hits" value="3 hits in 77 CRISPR screens"/>
</dbReference>
<dbReference type="ChiTaRS" id="Mmrn2">
    <property type="organism name" value="mouse"/>
</dbReference>
<dbReference type="PRO" id="PR:P59900"/>
<dbReference type="Proteomes" id="UP000000589">
    <property type="component" value="Chromosome 2"/>
</dbReference>
<dbReference type="RNAct" id="P59900">
    <property type="molecule type" value="protein"/>
</dbReference>
<dbReference type="Bgee" id="ENSMUSG00000050700">
    <property type="expression patterns" value="Expressed in ureter smooth muscle and 102 other cell types or tissues"/>
</dbReference>
<dbReference type="ExpressionAtlas" id="P59900">
    <property type="expression patterns" value="baseline and differential"/>
</dbReference>
<dbReference type="GO" id="GO:0005737">
    <property type="term" value="C:cytoplasm"/>
    <property type="evidence" value="ECO:0000314"/>
    <property type="project" value="MGI"/>
</dbReference>
<dbReference type="GO" id="GO:0005576">
    <property type="term" value="C:extracellular region"/>
    <property type="evidence" value="ECO:0007669"/>
    <property type="project" value="UniProtKB-KW"/>
</dbReference>
<dbReference type="GO" id="GO:0042802">
    <property type="term" value="F:identical protein binding"/>
    <property type="evidence" value="ECO:0007669"/>
    <property type="project" value="Ensembl"/>
</dbReference>
<dbReference type="FunFam" id="1.10.287.1490:FF:000037">
    <property type="entry name" value="Elastin microfibril interfacer 3"/>
    <property type="match status" value="1"/>
</dbReference>
<dbReference type="Gene3D" id="1.10.287.1490">
    <property type="match status" value="1"/>
</dbReference>
<dbReference type="InterPro" id="IPR050392">
    <property type="entry name" value="Collagen/C1q_domain"/>
</dbReference>
<dbReference type="InterPro" id="IPR011489">
    <property type="entry name" value="EMI_domain"/>
</dbReference>
<dbReference type="PANTHER" id="PTHR15427">
    <property type="entry name" value="EMILIN ELASTIN MICROFIBRIL INTERFACE-LOCATED PROTEIN ELASTIN MICROFIBRIL INTERFACER"/>
    <property type="match status" value="1"/>
</dbReference>
<dbReference type="PANTHER" id="PTHR15427:SF2">
    <property type="entry name" value="EMILIN-3"/>
    <property type="match status" value="1"/>
</dbReference>
<dbReference type="Pfam" id="PF07546">
    <property type="entry name" value="EMI"/>
    <property type="match status" value="1"/>
</dbReference>
<dbReference type="SUPFAM" id="SSF57997">
    <property type="entry name" value="Tropomyosin"/>
    <property type="match status" value="1"/>
</dbReference>
<dbReference type="PROSITE" id="PS51041">
    <property type="entry name" value="EMI"/>
    <property type="match status" value="1"/>
</dbReference>
<name>EMIL3_MOUSE</name>
<reference key="1">
    <citation type="journal article" date="2004" name="Genome Res.">
        <title>The status, quality, and expansion of the NIH full-length cDNA project: the Mammalian Gene Collection (MGC).</title>
        <authorList>
            <consortium name="The MGC Project Team"/>
        </authorList>
    </citation>
    <scope>NUCLEOTIDE SEQUENCE [LARGE SCALE MRNA]</scope>
    <source>
        <strain>C57BL/6J</strain>
        <tissue>Brain</tissue>
    </source>
</reference>
<reference key="2">
    <citation type="journal article" date="2002" name="Dev. Biol.">
        <title>Developmental expression and biochemical characterization of Emu family members.</title>
        <authorList>
            <person name="Leimeister C."/>
            <person name="Steidl C."/>
            <person name="Schumacher N."/>
            <person name="Erhard S."/>
            <person name="Gessler M."/>
        </authorList>
    </citation>
    <scope>DEVELOPMENTAL STAGE</scope>
</reference>
<reference key="3">
    <citation type="journal article" date="2004" name="Biochem. Biophys. Res. Commun.">
        <title>Molecular cloning and characterization of a novel gene, EMILIN-5, and its possible involvement in skeletal development.</title>
        <authorList>
            <person name="Doi M."/>
            <person name="Nagano A."/>
            <person name="Nakamura Y."/>
        </authorList>
    </citation>
    <scope>SUBCELLULAR LOCATION</scope>
    <scope>DEVELOPMENTAL STAGE</scope>
</reference>
<evidence type="ECO:0000250" key="1"/>
<evidence type="ECO:0000255" key="2"/>
<evidence type="ECO:0000255" key="3">
    <source>
        <dbReference type="PROSITE-ProRule" id="PRU00384"/>
    </source>
</evidence>
<evidence type="ECO:0000256" key="4">
    <source>
        <dbReference type="SAM" id="MobiDB-lite"/>
    </source>
</evidence>
<evidence type="ECO:0000269" key="5">
    <source>
    </source>
</evidence>
<evidence type="ECO:0000269" key="6">
    <source>
    </source>
</evidence>
<sequence>MGRRLSVWLCTVAALLSGAQAKGTPLLARPAQPSASRYSLYTTGWRPRLRPGPHKSLCAYVVHRNVTCVLQEGAESYIKAEYRNCGWGPNCPSTVRYRTVFRPRYKIGYKTVTDLAWRCCPGLTGESCPEHLTDHGATPPHQEPEPQIPLGQLGPGPRPSPYSREAPRPRGRKGQGPFGERLEQRLSQAYGTLSGLVASHENPNRITGDSRAPVVPIGFGVIPEGLVAPEDRGRGPLIPPLSEILSKVTEVSNTLQTKVQLLDEVRGLALGHEAHLQRLREAPPSPLTSLALLEEYVDQRLQRLWGSLLDGFEQKLQGVQSECDLRVQEVRQQCEEGQAASQRLHQSLDGRELALRRELSQLGTQLQGLTLTGGGTCCSQLALISARVDSLERNLQAVTETQGGPGTLAADELARLSAAMLQGGVDGLLEGLETINGTENGARGCCLRMEVGGWGVGGFGSTLEQRVQSLEERLATLTGELSPESAIPDRSARPLVHSELAVLEQRLVSLETSCTPSTTTAILDNLVAEVKAWQSRSEALLHQVARHTALLQQLNGTVAEVQGQLAEGTGSSLQGEITLLKVNLNSVSKSLTGLSDSVSQYSDAFSAANTSLDERERRVEAEVHTIQEQISSQGSRLQAGHRQVLNLRGELEQLKAGMANVARGLSRCRDTAQELQHTVGHFDQRVAQVEGACERLGLLATHLNSLPTEQLRSREGLWGHIDKLNHTLAQHTQDIARLRDDLLDCRAQLAEVRPGRAD</sequence>
<organism>
    <name type="scientific">Mus musculus</name>
    <name type="common">Mouse</name>
    <dbReference type="NCBI Taxonomy" id="10090"/>
    <lineage>
        <taxon>Eukaryota</taxon>
        <taxon>Metazoa</taxon>
        <taxon>Chordata</taxon>
        <taxon>Craniata</taxon>
        <taxon>Vertebrata</taxon>
        <taxon>Euteleostomi</taxon>
        <taxon>Mammalia</taxon>
        <taxon>Eutheria</taxon>
        <taxon>Euarchontoglires</taxon>
        <taxon>Glires</taxon>
        <taxon>Rodentia</taxon>
        <taxon>Myomorpha</taxon>
        <taxon>Muroidea</taxon>
        <taxon>Muridae</taxon>
        <taxon>Murinae</taxon>
        <taxon>Mus</taxon>
        <taxon>Mus</taxon>
    </lineage>
</organism>
<comment type="subcellular location">
    <subcellularLocation>
        <location evidence="1">Secreted</location>
        <location evidence="1">Extracellular space</location>
        <location evidence="1">Extracellular matrix</location>
    </subcellularLocation>
    <subcellularLocation>
        <location evidence="6">Cytoplasm</location>
    </subcellularLocation>
    <text>According to PubMed:14706625 it is cytoplasmic.</text>
</comment>
<comment type="developmental stage">
    <text evidence="5 6">At 9.5 dpc, expression is only observed in the tailbud and the hindgut. At 11.5 dpc the expression is found at sites of bone formation, i.e. surrounding mesenchymal condensates in the fore- and hindlimbs, the nose, the maxilla, and the other parts of the jaw. At 13.5 dpc, detected in perichondrium and around developing skeletons, but barely detectable in mature osteoblasts. At 14.5 dpc it is strongly expressed in the enteric nerves of the digestive tract and the bladder. Expression is also observed surrounding the main branches of the alveoli and surrounding sites of bone formation in skull and trunk.</text>
</comment>